<dbReference type="EMBL" id="CR382126">
    <property type="protein sequence ID" value="CAG97871.1"/>
    <property type="molecule type" value="Genomic_DNA"/>
</dbReference>
<dbReference type="RefSeq" id="XP_455164.1">
    <property type="nucleotide sequence ID" value="XM_455164.1"/>
</dbReference>
<dbReference type="SMR" id="Q6CLM5"/>
<dbReference type="FunCoup" id="Q6CLM5">
    <property type="interactions" value="108"/>
</dbReference>
<dbReference type="STRING" id="284590.Q6CLM5"/>
<dbReference type="PaxDb" id="284590-Q6CLM5"/>
<dbReference type="KEGG" id="kla:KLLA0_F01859g"/>
<dbReference type="eggNOG" id="KOG1658">
    <property type="taxonomic scope" value="Eukaryota"/>
</dbReference>
<dbReference type="HOGENOM" id="CLU_086758_0_0_1"/>
<dbReference type="InParanoid" id="Q6CLM5"/>
<dbReference type="OMA" id="CKKIART"/>
<dbReference type="Proteomes" id="UP000000598">
    <property type="component" value="Chromosome F"/>
</dbReference>
<dbReference type="GO" id="GO:0008623">
    <property type="term" value="C:CHRAC"/>
    <property type="evidence" value="ECO:0007669"/>
    <property type="project" value="TreeGrafter"/>
</dbReference>
<dbReference type="GO" id="GO:0046982">
    <property type="term" value="F:protein heterodimerization activity"/>
    <property type="evidence" value="ECO:0007669"/>
    <property type="project" value="InterPro"/>
</dbReference>
<dbReference type="GO" id="GO:0006261">
    <property type="term" value="P:DNA-templated DNA replication"/>
    <property type="evidence" value="ECO:0007669"/>
    <property type="project" value="TreeGrafter"/>
</dbReference>
<dbReference type="CDD" id="cd22929">
    <property type="entry name" value="HFD_POLE4-like"/>
    <property type="match status" value="1"/>
</dbReference>
<dbReference type="Gene3D" id="1.10.20.10">
    <property type="entry name" value="Histone, subunit A"/>
    <property type="match status" value="1"/>
</dbReference>
<dbReference type="InterPro" id="IPR003958">
    <property type="entry name" value="CBFA_NFYB_domain"/>
</dbReference>
<dbReference type="InterPro" id="IPR009072">
    <property type="entry name" value="Histone-fold"/>
</dbReference>
<dbReference type="InterPro" id="IPR050568">
    <property type="entry name" value="Transcr_DNA_Rep_Reg"/>
</dbReference>
<dbReference type="PANTHER" id="PTHR10252:SF54">
    <property type="entry name" value="CHROMATIN ACCESSIBILITY COMPLEX PROTEIN 1"/>
    <property type="match status" value="1"/>
</dbReference>
<dbReference type="PANTHER" id="PTHR10252">
    <property type="entry name" value="HISTONE-LIKE TRANSCRIPTION FACTOR CCAAT-RELATED"/>
    <property type="match status" value="1"/>
</dbReference>
<dbReference type="Pfam" id="PF00808">
    <property type="entry name" value="CBFD_NFYB_HMF"/>
    <property type="match status" value="1"/>
</dbReference>
<dbReference type="SUPFAM" id="SSF47113">
    <property type="entry name" value="Histone-fold"/>
    <property type="match status" value="1"/>
</dbReference>
<accession>Q6CLM5</accession>
<proteinExistence type="inferred from homology"/>
<organism>
    <name type="scientific">Kluyveromyces lactis (strain ATCC 8585 / CBS 2359 / DSM 70799 / NBRC 1267 / NRRL Y-1140 / WM37)</name>
    <name type="common">Yeast</name>
    <name type="synonym">Candida sphaerica</name>
    <dbReference type="NCBI Taxonomy" id="284590"/>
    <lineage>
        <taxon>Eukaryota</taxon>
        <taxon>Fungi</taxon>
        <taxon>Dikarya</taxon>
        <taxon>Ascomycota</taxon>
        <taxon>Saccharomycotina</taxon>
        <taxon>Saccharomycetes</taxon>
        <taxon>Saccharomycetales</taxon>
        <taxon>Saccharomycetaceae</taxon>
        <taxon>Kluyveromyces</taxon>
    </lineage>
</organism>
<protein>
    <recommendedName>
        <fullName>DNA polymerase epsilon subunit C</fullName>
    </recommendedName>
    <alternativeName>
        <fullName>DNA polymerase II subunit C</fullName>
    </alternativeName>
</protein>
<comment type="function">
    <text evidence="2">As accessory component of the DNA polymerase epsilon (DNA polymerase II) participates in chromosomal DNA replication.</text>
</comment>
<comment type="subunit">
    <text evidence="1">Heterotetramer. Consists of four subunits: POL2, DPB2, DPB3 and DPB4 (By similarity).</text>
</comment>
<comment type="subcellular location">
    <subcellularLocation>
        <location evidence="1">Nucleus</location>
    </subcellularLocation>
</comment>
<comment type="miscellaneous">
    <text>In eukaryotes there are five DNA polymerases: alpha, beta, gamma, delta, and epsilon which are responsible for different reactions of DNA synthesis.</text>
</comment>
<gene>
    <name type="primary">DPB3</name>
    <name type="ordered locus">KLLA0F01859g</name>
</gene>
<name>DPB3_KLULA</name>
<sequence>MDEYKSKLPRIPISKCKKIARTDPEYILTSQAAFAATAFTTELFIQMLAEETCSLAQIHKQTKTLRLNYEDLSTAIRNLDKFQFLSDVVPQTENLASLVRENKVRYTIVNPSPEIDIESEDEVDEANEPEVGEPEVDEAEVEAEVEAEAAEPETHTLDEPRPESSS</sequence>
<reference key="1">
    <citation type="journal article" date="2004" name="Nature">
        <title>Genome evolution in yeasts.</title>
        <authorList>
            <person name="Dujon B."/>
            <person name="Sherman D."/>
            <person name="Fischer G."/>
            <person name="Durrens P."/>
            <person name="Casaregola S."/>
            <person name="Lafontaine I."/>
            <person name="de Montigny J."/>
            <person name="Marck C."/>
            <person name="Neuveglise C."/>
            <person name="Talla E."/>
            <person name="Goffard N."/>
            <person name="Frangeul L."/>
            <person name="Aigle M."/>
            <person name="Anthouard V."/>
            <person name="Babour A."/>
            <person name="Barbe V."/>
            <person name="Barnay S."/>
            <person name="Blanchin S."/>
            <person name="Beckerich J.-M."/>
            <person name="Beyne E."/>
            <person name="Bleykasten C."/>
            <person name="Boisrame A."/>
            <person name="Boyer J."/>
            <person name="Cattolico L."/>
            <person name="Confanioleri F."/>
            <person name="de Daruvar A."/>
            <person name="Despons L."/>
            <person name="Fabre E."/>
            <person name="Fairhead C."/>
            <person name="Ferry-Dumazet H."/>
            <person name="Groppi A."/>
            <person name="Hantraye F."/>
            <person name="Hennequin C."/>
            <person name="Jauniaux N."/>
            <person name="Joyet P."/>
            <person name="Kachouri R."/>
            <person name="Kerrest A."/>
            <person name="Koszul R."/>
            <person name="Lemaire M."/>
            <person name="Lesur I."/>
            <person name="Ma L."/>
            <person name="Muller H."/>
            <person name="Nicaud J.-M."/>
            <person name="Nikolski M."/>
            <person name="Oztas S."/>
            <person name="Ozier-Kalogeropoulos O."/>
            <person name="Pellenz S."/>
            <person name="Potier S."/>
            <person name="Richard G.-F."/>
            <person name="Straub M.-L."/>
            <person name="Suleau A."/>
            <person name="Swennen D."/>
            <person name="Tekaia F."/>
            <person name="Wesolowski-Louvel M."/>
            <person name="Westhof E."/>
            <person name="Wirth B."/>
            <person name="Zeniou-Meyer M."/>
            <person name="Zivanovic Y."/>
            <person name="Bolotin-Fukuhara M."/>
            <person name="Thierry A."/>
            <person name="Bouchier C."/>
            <person name="Caudron B."/>
            <person name="Scarpelli C."/>
            <person name="Gaillardin C."/>
            <person name="Weissenbach J."/>
            <person name="Wincker P."/>
            <person name="Souciet J.-L."/>
        </authorList>
    </citation>
    <scope>NUCLEOTIDE SEQUENCE [LARGE SCALE GENOMIC DNA]</scope>
    <source>
        <strain>ATCC 8585 / CBS 2359 / DSM 70799 / NBRC 1267 / NRRL Y-1140 / WM37</strain>
    </source>
</reference>
<keyword id="KW-0235">DNA replication</keyword>
<keyword id="KW-0539">Nucleus</keyword>
<keyword id="KW-1185">Reference proteome</keyword>
<feature type="chain" id="PRO_0000208347" description="DNA polymerase epsilon subunit C">
    <location>
        <begin position="1"/>
        <end position="166"/>
    </location>
</feature>
<feature type="region of interest" description="Disordered" evidence="3">
    <location>
        <begin position="112"/>
        <end position="166"/>
    </location>
</feature>
<feature type="compositionally biased region" description="Acidic residues" evidence="3">
    <location>
        <begin position="115"/>
        <end position="151"/>
    </location>
</feature>
<feature type="compositionally biased region" description="Basic and acidic residues" evidence="3">
    <location>
        <begin position="152"/>
        <end position="166"/>
    </location>
</feature>
<evidence type="ECO:0000250" key="1"/>
<evidence type="ECO:0000250" key="2">
    <source>
        <dbReference type="UniProtKB" id="P27344"/>
    </source>
</evidence>
<evidence type="ECO:0000256" key="3">
    <source>
        <dbReference type="SAM" id="MobiDB-lite"/>
    </source>
</evidence>